<name>PYRB_NITMS</name>
<dbReference type="EC" id="2.1.3.2" evidence="1"/>
<dbReference type="EMBL" id="CP000866">
    <property type="protein sequence ID" value="ABX13582.1"/>
    <property type="molecule type" value="Genomic_DNA"/>
</dbReference>
<dbReference type="RefSeq" id="WP_012216068.1">
    <property type="nucleotide sequence ID" value="NC_010085.1"/>
</dbReference>
<dbReference type="SMR" id="A9A2Q5"/>
<dbReference type="FunCoup" id="A9A2Q5">
    <property type="interactions" value="185"/>
</dbReference>
<dbReference type="STRING" id="436308.Nmar_1686"/>
<dbReference type="EnsemblBacteria" id="ABX13582">
    <property type="protein sequence ID" value="ABX13582"/>
    <property type="gene ID" value="Nmar_1686"/>
</dbReference>
<dbReference type="GeneID" id="5774383"/>
<dbReference type="KEGG" id="nmr:Nmar_1686"/>
<dbReference type="eggNOG" id="arCOG00911">
    <property type="taxonomic scope" value="Archaea"/>
</dbReference>
<dbReference type="HOGENOM" id="CLU_043846_1_2_2"/>
<dbReference type="InParanoid" id="A9A2Q5"/>
<dbReference type="OrthoDB" id="7792at2157"/>
<dbReference type="PhylomeDB" id="A9A2Q5"/>
<dbReference type="UniPathway" id="UPA00070">
    <property type="reaction ID" value="UER00116"/>
</dbReference>
<dbReference type="Proteomes" id="UP000000792">
    <property type="component" value="Chromosome"/>
</dbReference>
<dbReference type="GO" id="GO:0005737">
    <property type="term" value="C:cytoplasm"/>
    <property type="evidence" value="ECO:0000318"/>
    <property type="project" value="GO_Central"/>
</dbReference>
<dbReference type="GO" id="GO:0016597">
    <property type="term" value="F:amino acid binding"/>
    <property type="evidence" value="ECO:0007669"/>
    <property type="project" value="InterPro"/>
</dbReference>
<dbReference type="GO" id="GO:0004070">
    <property type="term" value="F:aspartate carbamoyltransferase activity"/>
    <property type="evidence" value="ECO:0007669"/>
    <property type="project" value="UniProtKB-UniRule"/>
</dbReference>
<dbReference type="GO" id="GO:0006207">
    <property type="term" value="P:'de novo' pyrimidine nucleobase biosynthetic process"/>
    <property type="evidence" value="ECO:0007669"/>
    <property type="project" value="InterPro"/>
</dbReference>
<dbReference type="GO" id="GO:0044205">
    <property type="term" value="P:'de novo' UMP biosynthetic process"/>
    <property type="evidence" value="ECO:0007669"/>
    <property type="project" value="UniProtKB-UniRule"/>
</dbReference>
<dbReference type="GO" id="GO:0006541">
    <property type="term" value="P:glutamine metabolic process"/>
    <property type="evidence" value="ECO:0000318"/>
    <property type="project" value="GO_Central"/>
</dbReference>
<dbReference type="FunFam" id="3.40.50.1370:FF:000021">
    <property type="entry name" value="Aspartate carbamoyltransferase"/>
    <property type="match status" value="1"/>
</dbReference>
<dbReference type="Gene3D" id="3.40.50.1370">
    <property type="entry name" value="Aspartate/ornithine carbamoyltransferase"/>
    <property type="match status" value="2"/>
</dbReference>
<dbReference type="HAMAP" id="MF_00001">
    <property type="entry name" value="Asp_carb_tr"/>
    <property type="match status" value="1"/>
</dbReference>
<dbReference type="InterPro" id="IPR006132">
    <property type="entry name" value="Asp/Orn_carbamoyltranf_P-bd"/>
</dbReference>
<dbReference type="InterPro" id="IPR006130">
    <property type="entry name" value="Asp/Orn_carbamoylTrfase"/>
</dbReference>
<dbReference type="InterPro" id="IPR036901">
    <property type="entry name" value="Asp/Orn_carbamoylTrfase_sf"/>
</dbReference>
<dbReference type="InterPro" id="IPR002082">
    <property type="entry name" value="Asp_carbamoyltransf"/>
</dbReference>
<dbReference type="InterPro" id="IPR006131">
    <property type="entry name" value="Asp_carbamoyltransf_Asp/Orn-bd"/>
</dbReference>
<dbReference type="NCBIfam" id="TIGR00670">
    <property type="entry name" value="asp_carb_tr"/>
    <property type="match status" value="1"/>
</dbReference>
<dbReference type="NCBIfam" id="NF002032">
    <property type="entry name" value="PRK00856.1"/>
    <property type="match status" value="1"/>
</dbReference>
<dbReference type="PANTHER" id="PTHR45753:SF6">
    <property type="entry name" value="ASPARTATE CARBAMOYLTRANSFERASE"/>
    <property type="match status" value="1"/>
</dbReference>
<dbReference type="PANTHER" id="PTHR45753">
    <property type="entry name" value="ORNITHINE CARBAMOYLTRANSFERASE, MITOCHONDRIAL"/>
    <property type="match status" value="1"/>
</dbReference>
<dbReference type="Pfam" id="PF00185">
    <property type="entry name" value="OTCace"/>
    <property type="match status" value="1"/>
</dbReference>
<dbReference type="Pfam" id="PF02729">
    <property type="entry name" value="OTCace_N"/>
    <property type="match status" value="1"/>
</dbReference>
<dbReference type="PRINTS" id="PR00100">
    <property type="entry name" value="AOTCASE"/>
</dbReference>
<dbReference type="PRINTS" id="PR00101">
    <property type="entry name" value="ATCASE"/>
</dbReference>
<dbReference type="SUPFAM" id="SSF53671">
    <property type="entry name" value="Aspartate/ornithine carbamoyltransferase"/>
    <property type="match status" value="1"/>
</dbReference>
<dbReference type="PROSITE" id="PS00097">
    <property type="entry name" value="CARBAMOYLTRANSFERASE"/>
    <property type="match status" value="1"/>
</dbReference>
<protein>
    <recommendedName>
        <fullName evidence="1">Aspartate carbamoyltransferase catalytic subunit</fullName>
        <ecNumber evidence="1">2.1.3.2</ecNumber>
    </recommendedName>
    <alternativeName>
        <fullName evidence="1">Aspartate transcarbamylase</fullName>
        <shortName evidence="1">ATCase</shortName>
    </alternativeName>
</protein>
<accession>A9A2Q5</accession>
<gene>
    <name evidence="1" type="primary">pyrB</name>
    <name type="ordered locus">Nmar_1686</name>
</gene>
<proteinExistence type="inferred from homology"/>
<organism>
    <name type="scientific">Nitrosopumilus maritimus (strain SCM1)</name>
    <dbReference type="NCBI Taxonomy" id="436308"/>
    <lineage>
        <taxon>Archaea</taxon>
        <taxon>Nitrososphaerota</taxon>
        <taxon>Nitrososphaeria</taxon>
        <taxon>Nitrosopumilales</taxon>
        <taxon>Nitrosopumilaceae</taxon>
        <taxon>Nitrosopumilus</taxon>
    </lineage>
</organism>
<evidence type="ECO:0000255" key="1">
    <source>
        <dbReference type="HAMAP-Rule" id="MF_00001"/>
    </source>
</evidence>
<keyword id="KW-0665">Pyrimidine biosynthesis</keyword>
<keyword id="KW-1185">Reference proteome</keyword>
<keyword id="KW-0808">Transferase</keyword>
<sequence>MNEFYQKDIISIKDFSKDQLEQIFQSTDKIISLDPIDRREICKGKTLGYLFYEPSTRTRLSFEAAMASIGGNSLGISDITSSSTQKGESLADTVRIISIYSDAMVLRHPLDGSSRFAAEVSDKPVINAGSGTEEHPTQAIQDLYTIKKEKKKIDRLKIGIVGDLKYGRTVYSLLHGLGNYDVDVRLISPESLRIRSDSTYEIKQKLDYTESTNIEDHIDELDVLYVTRIQKERFPDEEEYLKVKGSYVVGLDLLKQMKDDSIILHPLPRIDEISTDVDKTKNAKYFEQAEYGKYTRAALLGLTLNENGF</sequence>
<feature type="chain" id="PRO_1000088782" description="Aspartate carbamoyltransferase catalytic subunit">
    <location>
        <begin position="1"/>
        <end position="309"/>
    </location>
</feature>
<feature type="binding site" evidence="1">
    <location>
        <position position="57"/>
    </location>
    <ligand>
        <name>carbamoyl phosphate</name>
        <dbReference type="ChEBI" id="CHEBI:58228"/>
    </ligand>
</feature>
<feature type="binding site" evidence="1">
    <location>
        <position position="58"/>
    </location>
    <ligand>
        <name>carbamoyl phosphate</name>
        <dbReference type="ChEBI" id="CHEBI:58228"/>
    </ligand>
</feature>
<feature type="binding site" evidence="1">
    <location>
        <position position="86"/>
    </location>
    <ligand>
        <name>L-aspartate</name>
        <dbReference type="ChEBI" id="CHEBI:29991"/>
    </ligand>
</feature>
<feature type="binding site" evidence="1">
    <location>
        <position position="107"/>
    </location>
    <ligand>
        <name>carbamoyl phosphate</name>
        <dbReference type="ChEBI" id="CHEBI:58228"/>
    </ligand>
</feature>
<feature type="binding site" evidence="1">
    <location>
        <position position="135"/>
    </location>
    <ligand>
        <name>carbamoyl phosphate</name>
        <dbReference type="ChEBI" id="CHEBI:58228"/>
    </ligand>
</feature>
<feature type="binding site" evidence="1">
    <location>
        <position position="138"/>
    </location>
    <ligand>
        <name>carbamoyl phosphate</name>
        <dbReference type="ChEBI" id="CHEBI:58228"/>
    </ligand>
</feature>
<feature type="binding site" evidence="1">
    <location>
        <position position="168"/>
    </location>
    <ligand>
        <name>L-aspartate</name>
        <dbReference type="ChEBI" id="CHEBI:29991"/>
    </ligand>
</feature>
<feature type="binding site" evidence="1">
    <location>
        <position position="228"/>
    </location>
    <ligand>
        <name>L-aspartate</name>
        <dbReference type="ChEBI" id="CHEBI:29991"/>
    </ligand>
</feature>
<feature type="binding site" evidence="1">
    <location>
        <position position="267"/>
    </location>
    <ligand>
        <name>carbamoyl phosphate</name>
        <dbReference type="ChEBI" id="CHEBI:58228"/>
    </ligand>
</feature>
<feature type="binding site" evidence="1">
    <location>
        <position position="268"/>
    </location>
    <ligand>
        <name>carbamoyl phosphate</name>
        <dbReference type="ChEBI" id="CHEBI:58228"/>
    </ligand>
</feature>
<comment type="function">
    <text evidence="1">Catalyzes the condensation of carbamoyl phosphate and aspartate to form carbamoyl aspartate and inorganic phosphate, the committed step in the de novo pyrimidine nucleotide biosynthesis pathway.</text>
</comment>
<comment type="catalytic activity">
    <reaction evidence="1">
        <text>carbamoyl phosphate + L-aspartate = N-carbamoyl-L-aspartate + phosphate + H(+)</text>
        <dbReference type="Rhea" id="RHEA:20013"/>
        <dbReference type="ChEBI" id="CHEBI:15378"/>
        <dbReference type="ChEBI" id="CHEBI:29991"/>
        <dbReference type="ChEBI" id="CHEBI:32814"/>
        <dbReference type="ChEBI" id="CHEBI:43474"/>
        <dbReference type="ChEBI" id="CHEBI:58228"/>
        <dbReference type="EC" id="2.1.3.2"/>
    </reaction>
</comment>
<comment type="pathway">
    <text evidence="1">Pyrimidine metabolism; UMP biosynthesis via de novo pathway; (S)-dihydroorotate from bicarbonate: step 2/3.</text>
</comment>
<comment type="subunit">
    <text evidence="1">Heterooligomer of catalytic and regulatory chains.</text>
</comment>
<comment type="similarity">
    <text evidence="1">Belongs to the aspartate/ornithine carbamoyltransferase superfamily. ATCase family.</text>
</comment>
<reference key="1">
    <citation type="journal article" date="2010" name="Proc. Natl. Acad. Sci. U.S.A.">
        <title>Nitrosopumilus maritimus genome reveals unique mechanisms for nitrification and autotrophy in globally distributed marine crenarchaea.</title>
        <authorList>
            <person name="Walker C.B."/>
            <person name="de la Torre J.R."/>
            <person name="Klotz M.G."/>
            <person name="Urakawa H."/>
            <person name="Pinel N."/>
            <person name="Arp D.J."/>
            <person name="Brochier-Armanet C."/>
            <person name="Chain P.S."/>
            <person name="Chan P.P."/>
            <person name="Gollabgir A."/>
            <person name="Hemp J."/>
            <person name="Hugler M."/>
            <person name="Karr E.A."/>
            <person name="Konneke M."/>
            <person name="Shin M."/>
            <person name="Lawton T.J."/>
            <person name="Lowe T."/>
            <person name="Martens-Habbena W."/>
            <person name="Sayavedra-Soto L.A."/>
            <person name="Lang D."/>
            <person name="Sievert S.M."/>
            <person name="Rosenzweig A.C."/>
            <person name="Manning G."/>
            <person name="Stahl D.A."/>
        </authorList>
    </citation>
    <scope>NUCLEOTIDE SEQUENCE [LARGE SCALE GENOMIC DNA]</scope>
    <source>
        <strain>SCM1</strain>
    </source>
</reference>